<reference key="1">
    <citation type="journal article" date="2009" name="PLoS ONE">
        <title>Salmonella paratyphi C: genetic divergence from Salmonella choleraesuis and pathogenic convergence with Salmonella typhi.</title>
        <authorList>
            <person name="Liu W.-Q."/>
            <person name="Feng Y."/>
            <person name="Wang Y."/>
            <person name="Zou Q.-H."/>
            <person name="Chen F."/>
            <person name="Guo J.-T."/>
            <person name="Peng Y.-H."/>
            <person name="Jin Y."/>
            <person name="Li Y.-G."/>
            <person name="Hu S.-N."/>
            <person name="Johnston R.N."/>
            <person name="Liu G.-R."/>
            <person name="Liu S.-L."/>
        </authorList>
    </citation>
    <scope>NUCLEOTIDE SEQUENCE [LARGE SCALE GENOMIC DNA]</scope>
    <source>
        <strain>RKS4594</strain>
    </source>
</reference>
<name>NANA_SALPC</name>
<feature type="chain" id="PRO_1000165005" description="N-acetylneuraminate lyase">
    <location>
        <begin position="1"/>
        <end position="297"/>
    </location>
</feature>
<feature type="active site" description="Proton donor" evidence="1">
    <location>
        <position position="137"/>
    </location>
</feature>
<feature type="active site" description="Schiff-base intermediate with substrate" evidence="1">
    <location>
        <position position="165"/>
    </location>
</feature>
<feature type="binding site" evidence="1">
    <location>
        <position position="47"/>
    </location>
    <ligand>
        <name>aceneuramate</name>
        <dbReference type="ChEBI" id="CHEBI:173083"/>
    </ligand>
</feature>
<feature type="binding site" evidence="1">
    <location>
        <position position="48"/>
    </location>
    <ligand>
        <name>aceneuramate</name>
        <dbReference type="ChEBI" id="CHEBI:173083"/>
    </ligand>
</feature>
<feature type="binding site" evidence="1">
    <location>
        <position position="167"/>
    </location>
    <ligand>
        <name>aceneuramate</name>
        <dbReference type="ChEBI" id="CHEBI:173083"/>
    </ligand>
</feature>
<feature type="binding site" evidence="1">
    <location>
        <position position="189"/>
    </location>
    <ligand>
        <name>aceneuramate</name>
        <dbReference type="ChEBI" id="CHEBI:173083"/>
    </ligand>
</feature>
<feature type="binding site" evidence="1">
    <location>
        <position position="191"/>
    </location>
    <ligand>
        <name>aceneuramate</name>
        <dbReference type="ChEBI" id="CHEBI:173083"/>
    </ligand>
</feature>
<feature type="binding site" evidence="1">
    <location>
        <position position="192"/>
    </location>
    <ligand>
        <name>aceneuramate</name>
        <dbReference type="ChEBI" id="CHEBI:173083"/>
    </ligand>
</feature>
<feature type="binding site" evidence="1">
    <location>
        <position position="208"/>
    </location>
    <ligand>
        <name>aceneuramate</name>
        <dbReference type="ChEBI" id="CHEBI:173083"/>
    </ligand>
</feature>
<accession>C0PZN4</accession>
<gene>
    <name evidence="1" type="primary">nanA</name>
    <name type="ordered locus">SPC_3409</name>
</gene>
<keyword id="KW-0119">Carbohydrate metabolism</keyword>
<keyword id="KW-0963">Cytoplasm</keyword>
<keyword id="KW-0456">Lyase</keyword>
<keyword id="KW-0704">Schiff base</keyword>
<protein>
    <recommendedName>
        <fullName evidence="1">N-acetylneuraminate lyase</fullName>
        <shortName evidence="1">NAL</shortName>
        <shortName evidence="1">Neu5Ac lyase</shortName>
        <ecNumber evidence="1">4.1.3.3</ecNumber>
    </recommendedName>
    <alternativeName>
        <fullName evidence="1">N-acetylneuraminate pyruvate-lyase</fullName>
    </alternativeName>
    <alternativeName>
        <fullName evidence="1">N-acetylneuraminic acid aldolase</fullName>
    </alternativeName>
    <alternativeName>
        <fullName evidence="1">Sialate lyase</fullName>
    </alternativeName>
    <alternativeName>
        <fullName evidence="1">Sialic acid aldolase</fullName>
    </alternativeName>
    <alternativeName>
        <fullName evidence="1">Sialic acid lyase</fullName>
    </alternativeName>
</protein>
<proteinExistence type="inferred from homology"/>
<sequence length="297" mass="32469">MAKALQGVMAALLTPFDHQQQLDSESLRRLVRFNIGQGIDGLYVGGSTGEAFVQSLAEREQVLEIVAEEAKGKITLIAHVGTVSTAESQQLASAAKRYGFDAVSAVTPFYYPFSFEEHCDHYRAIIDSADGLPMVVYNIPALSGVKLTLDQINTLVTLPGVSALKQTSGDLFQMEQIRRAHPDLVLYNGYDEIFASGLLAGADGGIGSTYNIMGWRYQGIVQALREGDVAKAQRLQTECNKVIDLLIKTGVFRGLKTVLHYMDVLSVPLCRKPFAPVDEKYLPALKALAQQLMEEKA</sequence>
<organism>
    <name type="scientific">Salmonella paratyphi C (strain RKS4594)</name>
    <dbReference type="NCBI Taxonomy" id="476213"/>
    <lineage>
        <taxon>Bacteria</taxon>
        <taxon>Pseudomonadati</taxon>
        <taxon>Pseudomonadota</taxon>
        <taxon>Gammaproteobacteria</taxon>
        <taxon>Enterobacterales</taxon>
        <taxon>Enterobacteriaceae</taxon>
        <taxon>Salmonella</taxon>
    </lineage>
</organism>
<evidence type="ECO:0000255" key="1">
    <source>
        <dbReference type="HAMAP-Rule" id="MF_01237"/>
    </source>
</evidence>
<dbReference type="EC" id="4.1.3.3" evidence="1"/>
<dbReference type="EMBL" id="CP000857">
    <property type="protein sequence ID" value="ACN47494.1"/>
    <property type="molecule type" value="Genomic_DNA"/>
</dbReference>
<dbReference type="RefSeq" id="WP_001029665.1">
    <property type="nucleotide sequence ID" value="NC_012125.1"/>
</dbReference>
<dbReference type="SMR" id="C0PZN4"/>
<dbReference type="KEGG" id="sei:SPC_3409"/>
<dbReference type="HOGENOM" id="CLU_049343_6_0_6"/>
<dbReference type="UniPathway" id="UPA00629">
    <property type="reaction ID" value="UER00680"/>
</dbReference>
<dbReference type="Proteomes" id="UP000001599">
    <property type="component" value="Chromosome"/>
</dbReference>
<dbReference type="GO" id="GO:0005829">
    <property type="term" value="C:cytosol"/>
    <property type="evidence" value="ECO:0007669"/>
    <property type="project" value="TreeGrafter"/>
</dbReference>
<dbReference type="GO" id="GO:0008747">
    <property type="term" value="F:N-acetylneuraminate lyase activity"/>
    <property type="evidence" value="ECO:0007669"/>
    <property type="project" value="UniProtKB-UniRule"/>
</dbReference>
<dbReference type="GO" id="GO:0005975">
    <property type="term" value="P:carbohydrate metabolic process"/>
    <property type="evidence" value="ECO:0007669"/>
    <property type="project" value="UniProtKB-UniRule"/>
</dbReference>
<dbReference type="GO" id="GO:0019262">
    <property type="term" value="P:N-acetylneuraminate catabolic process"/>
    <property type="evidence" value="ECO:0007669"/>
    <property type="project" value="UniProtKB-UniRule"/>
</dbReference>
<dbReference type="CDD" id="cd00954">
    <property type="entry name" value="NAL"/>
    <property type="match status" value="1"/>
</dbReference>
<dbReference type="FunFam" id="3.20.20.70:FF:000039">
    <property type="entry name" value="N-acetylneuraminate lyase"/>
    <property type="match status" value="1"/>
</dbReference>
<dbReference type="Gene3D" id="3.20.20.70">
    <property type="entry name" value="Aldolase class I"/>
    <property type="match status" value="1"/>
</dbReference>
<dbReference type="HAMAP" id="MF_01237">
    <property type="entry name" value="N_acetylneuram_lyase"/>
    <property type="match status" value="1"/>
</dbReference>
<dbReference type="InterPro" id="IPR013785">
    <property type="entry name" value="Aldolase_TIM"/>
</dbReference>
<dbReference type="InterPro" id="IPR002220">
    <property type="entry name" value="DapA-like"/>
</dbReference>
<dbReference type="InterPro" id="IPR005264">
    <property type="entry name" value="NanA"/>
</dbReference>
<dbReference type="InterPro" id="IPR020625">
    <property type="entry name" value="Schiff_base-form_aldolases_AS"/>
</dbReference>
<dbReference type="InterPro" id="IPR020624">
    <property type="entry name" value="Schiff_base-form_aldolases_CS"/>
</dbReference>
<dbReference type="NCBIfam" id="TIGR00683">
    <property type="entry name" value="nanA"/>
    <property type="match status" value="1"/>
</dbReference>
<dbReference type="NCBIfam" id="NF003164">
    <property type="entry name" value="PRK04147.1"/>
    <property type="match status" value="1"/>
</dbReference>
<dbReference type="PANTHER" id="PTHR42849">
    <property type="entry name" value="N-ACETYLNEURAMINATE LYASE"/>
    <property type="match status" value="1"/>
</dbReference>
<dbReference type="PANTHER" id="PTHR42849:SF1">
    <property type="entry name" value="N-ACETYLNEURAMINATE LYASE"/>
    <property type="match status" value="1"/>
</dbReference>
<dbReference type="Pfam" id="PF00701">
    <property type="entry name" value="DHDPS"/>
    <property type="match status" value="1"/>
</dbReference>
<dbReference type="PIRSF" id="PIRSF001365">
    <property type="entry name" value="DHDPS"/>
    <property type="match status" value="1"/>
</dbReference>
<dbReference type="PRINTS" id="PR00146">
    <property type="entry name" value="DHPICSNTHASE"/>
</dbReference>
<dbReference type="SMART" id="SM01130">
    <property type="entry name" value="DHDPS"/>
    <property type="match status" value="1"/>
</dbReference>
<dbReference type="SUPFAM" id="SSF51569">
    <property type="entry name" value="Aldolase"/>
    <property type="match status" value="1"/>
</dbReference>
<dbReference type="PROSITE" id="PS00665">
    <property type="entry name" value="DHDPS_1"/>
    <property type="match status" value="1"/>
</dbReference>
<dbReference type="PROSITE" id="PS00666">
    <property type="entry name" value="DHDPS_2"/>
    <property type="match status" value="1"/>
</dbReference>
<comment type="function">
    <text evidence="1">Catalyzes the reversible aldol cleavage of N-acetylneuraminic acid (sialic acid; Neu5Ac) to form pyruvate and N-acetylmannosamine (ManNAc) via a Schiff base intermediate.</text>
</comment>
<comment type="catalytic activity">
    <reaction evidence="1">
        <text>aceneuramate = aldehydo-N-acetyl-D-mannosamine + pyruvate</text>
        <dbReference type="Rhea" id="RHEA:23296"/>
        <dbReference type="ChEBI" id="CHEBI:15361"/>
        <dbReference type="ChEBI" id="CHEBI:17122"/>
        <dbReference type="ChEBI" id="CHEBI:173083"/>
        <dbReference type="EC" id="4.1.3.3"/>
    </reaction>
</comment>
<comment type="pathway">
    <text evidence="1">Amino-sugar metabolism; N-acetylneuraminate degradation; D-fructose 6-phosphate from N-acetylneuraminate: step 1/5.</text>
</comment>
<comment type="subunit">
    <text evidence="1">Homotetramer.</text>
</comment>
<comment type="subcellular location">
    <subcellularLocation>
        <location evidence="1">Cytoplasm</location>
    </subcellularLocation>
</comment>
<comment type="similarity">
    <text evidence="1">Belongs to the DapA family. NanA subfamily.</text>
</comment>